<feature type="signal peptide" evidence="5">
    <location>
        <begin position="1"/>
        <end position="33"/>
    </location>
</feature>
<feature type="chain" id="PRO_0000034110" description="Streptolysin O">
    <location>
        <begin position="34"/>
        <end position="571"/>
    </location>
</feature>
<feature type="transmembrane region" description="Beta stranded" evidence="4">
    <location>
        <begin position="260"/>
        <end position="273"/>
    </location>
</feature>
<feature type="transmembrane region" description="Beta stranded" evidence="4">
    <location>
        <begin position="280"/>
        <end position="289"/>
    </location>
</feature>
<feature type="transmembrane region" description="Beta stranded" evidence="4">
    <location>
        <begin position="358"/>
        <end position="367"/>
    </location>
</feature>
<feature type="transmembrane region" description="Beta stranded" evidence="4">
    <location>
        <begin position="375"/>
        <end position="387"/>
    </location>
</feature>
<feature type="region of interest" description="Disordered" evidence="6">
    <location>
        <begin position="30"/>
        <end position="108"/>
    </location>
</feature>
<feature type="short sequence motif" description="Conserved undecapeptide" evidence="7">
    <location>
        <begin position="529"/>
        <end position="539"/>
    </location>
</feature>
<feature type="short sequence motif" description="Cholesterol binding" evidence="1">
    <location>
        <begin position="561"/>
        <end position="562"/>
    </location>
</feature>
<feature type="compositionally biased region" description="Low complexity" evidence="6">
    <location>
        <begin position="37"/>
        <end position="48"/>
    </location>
</feature>
<feature type="compositionally biased region" description="Basic and acidic residues" evidence="6">
    <location>
        <begin position="50"/>
        <end position="68"/>
    </location>
</feature>
<feature type="compositionally biased region" description="Basic and acidic residues" evidence="6">
    <location>
        <begin position="79"/>
        <end position="108"/>
    </location>
</feature>
<keyword id="KW-0204">Cytolysis</keyword>
<keyword id="KW-0354">Hemolysis</keyword>
<keyword id="KW-1032">Host cell membrane</keyword>
<keyword id="KW-1043">Host membrane</keyword>
<keyword id="KW-0446">Lipid-binding</keyword>
<keyword id="KW-0472">Membrane</keyword>
<keyword id="KW-0964">Secreted</keyword>
<keyword id="KW-0732">Signal</keyword>
<keyword id="KW-0800">Toxin</keyword>
<keyword id="KW-0812">Transmembrane</keyword>
<keyword id="KW-1134">Transmembrane beta strand</keyword>
<keyword id="KW-0843">Virulence</keyword>
<sequence length="571" mass="63667">MSNKKTFKKYSRVAGLLTAALIIGNLVTANAESNKQNTASTETTTTNEQPKPESSELTTEKAGQKTDDMLNSNDMIKLAPKEMPLESAEKEEKKSEDKKKSEEDHTEEINDKIYSLNYNELEVLAKNGETIENFVPKEGVKKADKFIVIERKKKNINTTPVDISIIDSVTDRTYPAALQLANKGFTENKPDAVVTKRNPQKIHIDLPGMGDKATVEVNDPTYANVSTAIDNLVNQWHDNYSGGNTLPARTQYTESMVYSKSQIEAALNVNSKILDGTLGIDFKSISKGEKKVMIAAYKQIFYTVSANLPNNPADVFDKSVTFKELQRKGVSNEAPPLFVSNVAYGRTVFVKLETSSKSNDVEAAFSAALKGTDVKTNGKYSDILENSSFTAVVLGGDAAEHNKVVTKDFDVIRNVIKDNATFSRKNPAYPISYTSVFLKNNKIAGVNNRTEYVETTSTEYTSGKINLSHRGAYVAQYEILWDEINYDDKGKEVITKRRWDNNWYSKTSPFSTVIPLGANSRNIRIMARECTGLAWEWWRKVIDERDVKLSKEINVNISGSTLSPYGSITYK</sequence>
<comment type="function">
    <text evidence="3">A cholesterol-dependent toxin that causes cytolysis by forming pores in cholesterol containing host membranes. After binding to target membranes, the protein undergoes a major conformation change, leading to its insertion in the host membrane and formation of an oligomeric pore complex. Cholesterol is required for binding to host membranes, membrane insertion and pore formation; cholesterol binding is mediated by a Thr-Leu pair in the C-terminus. Can be reversibly inactivated by oxidation.</text>
</comment>
<comment type="subunit">
    <text evidence="4">Homooligomeric pore complex of 35 to 50 subunits; when inserted in the host membrane.</text>
</comment>
<comment type="subcellular location">
    <subcellularLocation>
        <location evidence="2">Secreted</location>
    </subcellularLocation>
    <subcellularLocation>
        <location evidence="3">Host cell membrane</location>
        <topology evidence="4">Multi-pass membrane protein</topology>
    </subcellularLocation>
    <text evidence="2 4">Probably secreted as soluble protein by the accessory Sec system (By similarity). It then inserts into the host cell membrane and forms pores formed by transmembrane beta-strands (By similarity).</text>
</comment>
<comment type="similarity">
    <text evidence="7">Belongs to the cholesterol-dependent cytolysin family.</text>
</comment>
<comment type="sequence caution" evidence="7">
    <conflict type="erroneous initiation">
        <sequence resource="EMBL-CDS" id="AAL96968"/>
    </conflict>
    <text>Truncated N-terminus.</text>
</comment>
<gene>
    <name type="primary">slo</name>
    <name type="ordered locus">spyM18_0165</name>
</gene>
<protein>
    <recommendedName>
        <fullName>Streptolysin O</fullName>
        <shortName>SLO</shortName>
    </recommendedName>
    <alternativeName>
        <fullName>Thiol-activated cytolysin</fullName>
    </alternativeName>
</protein>
<name>TACY_STRP8</name>
<reference key="1">
    <citation type="journal article" date="2002" name="Proc. Natl. Acad. Sci. U.S.A.">
        <title>Genome sequence and comparative microarray analysis of serotype M18 group A Streptococcus strains associated with acute rheumatic fever outbreaks.</title>
        <authorList>
            <person name="Smoot J.C."/>
            <person name="Barbian K.D."/>
            <person name="Van Gompel J.J."/>
            <person name="Smoot L.M."/>
            <person name="Chaussee M.S."/>
            <person name="Sylva G.L."/>
            <person name="Sturdevant D.E."/>
            <person name="Ricklefs S.M."/>
            <person name="Porcella S.F."/>
            <person name="Parkins L.D."/>
            <person name="Beres S.B."/>
            <person name="Campbell D.S."/>
            <person name="Smith T.M."/>
            <person name="Zhang Q."/>
            <person name="Kapur V."/>
            <person name="Daly J.A."/>
            <person name="Veasy L.G."/>
            <person name="Musser J.M."/>
        </authorList>
    </citation>
    <scope>NUCLEOTIDE SEQUENCE [LARGE SCALE GENOMIC DNA]</scope>
    <source>
        <strain>MGAS8232</strain>
    </source>
</reference>
<dbReference type="EMBL" id="AE009949">
    <property type="protein sequence ID" value="AAL96968.1"/>
    <property type="status" value="ALT_INIT"/>
    <property type="molecule type" value="Genomic_DNA"/>
</dbReference>
<dbReference type="RefSeq" id="WP_072135444.1">
    <property type="nucleotide sequence ID" value="NC_003485.1"/>
</dbReference>
<dbReference type="SMR" id="Q8P2T7"/>
<dbReference type="KEGG" id="spm:spyM18_0165"/>
<dbReference type="HOGENOM" id="CLU_026912_1_0_9"/>
<dbReference type="GO" id="GO:0005576">
    <property type="term" value="C:extracellular region"/>
    <property type="evidence" value="ECO:0007669"/>
    <property type="project" value="UniProtKB-SubCell"/>
</dbReference>
<dbReference type="GO" id="GO:0020002">
    <property type="term" value="C:host cell plasma membrane"/>
    <property type="evidence" value="ECO:0007669"/>
    <property type="project" value="UniProtKB-SubCell"/>
</dbReference>
<dbReference type="GO" id="GO:0016020">
    <property type="term" value="C:membrane"/>
    <property type="evidence" value="ECO:0007669"/>
    <property type="project" value="UniProtKB-KW"/>
</dbReference>
<dbReference type="GO" id="GO:0015485">
    <property type="term" value="F:cholesterol binding"/>
    <property type="evidence" value="ECO:0007669"/>
    <property type="project" value="InterPro"/>
</dbReference>
<dbReference type="GO" id="GO:0090729">
    <property type="term" value="F:toxin activity"/>
    <property type="evidence" value="ECO:0007669"/>
    <property type="project" value="UniProtKB-KW"/>
</dbReference>
<dbReference type="GO" id="GO:0031640">
    <property type="term" value="P:killing of cells of another organism"/>
    <property type="evidence" value="ECO:0007669"/>
    <property type="project" value="UniProtKB-KW"/>
</dbReference>
<dbReference type="Gene3D" id="3.30.1040.20">
    <property type="match status" value="1"/>
</dbReference>
<dbReference type="Gene3D" id="3.40.30.40">
    <property type="entry name" value="Perfringolysin"/>
    <property type="match status" value="1"/>
</dbReference>
<dbReference type="Gene3D" id="2.60.40.1430">
    <property type="entry name" value="Perfringolysin, domain 4"/>
    <property type="match status" value="1"/>
</dbReference>
<dbReference type="Gene3D" id="3.90.840.10">
    <property type="entry name" value="Thiol-activated cytolysin superfamily/Thiol-activated cytolysin, alpha-beta domain"/>
    <property type="match status" value="1"/>
</dbReference>
<dbReference type="InterPro" id="IPR035390">
    <property type="entry name" value="Thiol_cytolys_C"/>
</dbReference>
<dbReference type="InterPro" id="IPR038700">
    <property type="entry name" value="Thiol_cytolys_C_sf"/>
</dbReference>
<dbReference type="InterPro" id="IPR001869">
    <property type="entry name" value="Thiol_cytolysin"/>
</dbReference>
<dbReference type="InterPro" id="IPR036363">
    <property type="entry name" value="Thiol_cytolysin_ab_sf"/>
</dbReference>
<dbReference type="InterPro" id="IPR036359">
    <property type="entry name" value="Thiol_cytolysin_sf"/>
</dbReference>
<dbReference type="Pfam" id="PF17440">
    <property type="entry name" value="Thiol_cytolys_C"/>
    <property type="match status" value="1"/>
</dbReference>
<dbReference type="Pfam" id="PF01289">
    <property type="entry name" value="Thiol_cytolysin"/>
    <property type="match status" value="1"/>
</dbReference>
<dbReference type="PRINTS" id="PR01400">
    <property type="entry name" value="TACYTOLYSIN"/>
</dbReference>
<dbReference type="SUPFAM" id="SSF56978">
    <property type="entry name" value="Perfringolysin"/>
    <property type="match status" value="1"/>
</dbReference>
<dbReference type="PROSITE" id="PS00481">
    <property type="entry name" value="THIOL_CYTOLYSINS"/>
    <property type="match status" value="1"/>
</dbReference>
<organism>
    <name type="scientific">Streptococcus pyogenes serotype M18 (strain MGAS8232)</name>
    <dbReference type="NCBI Taxonomy" id="186103"/>
    <lineage>
        <taxon>Bacteria</taxon>
        <taxon>Bacillati</taxon>
        <taxon>Bacillota</taxon>
        <taxon>Bacilli</taxon>
        <taxon>Lactobacillales</taxon>
        <taxon>Streptococcaceae</taxon>
        <taxon>Streptococcus</taxon>
    </lineage>
</organism>
<accession>Q8P2T7</accession>
<evidence type="ECO:0000250" key="1">
    <source>
        <dbReference type="UniProtKB" id="P0C2E9"/>
    </source>
</evidence>
<evidence type="ECO:0000250" key="2">
    <source>
        <dbReference type="UniProtKB" id="P0C2J9"/>
    </source>
</evidence>
<evidence type="ECO:0000250" key="3">
    <source>
        <dbReference type="UniProtKB" id="P13128"/>
    </source>
</evidence>
<evidence type="ECO:0000250" key="4">
    <source>
        <dbReference type="UniProtKB" id="Q04IN8"/>
    </source>
</evidence>
<evidence type="ECO:0000255" key="5"/>
<evidence type="ECO:0000256" key="6">
    <source>
        <dbReference type="SAM" id="MobiDB-lite"/>
    </source>
</evidence>
<evidence type="ECO:0000305" key="7"/>
<proteinExistence type="inferred from homology"/>